<proteinExistence type="inferred from homology"/>
<protein>
    <recommendedName>
        <fullName evidence="1">Glycerol kinase</fullName>
        <ecNumber evidence="1">2.7.1.30</ecNumber>
    </recommendedName>
    <alternativeName>
        <fullName evidence="1">ATP:glycerol 3-phosphotransferase</fullName>
    </alternativeName>
    <alternativeName>
        <fullName evidence="1">Glycerokinase</fullName>
        <shortName evidence="1">GK</shortName>
    </alternativeName>
</protein>
<feature type="chain" id="PRO_1000077413" description="Glycerol kinase">
    <location>
        <begin position="1"/>
        <end position="499"/>
    </location>
</feature>
<feature type="binding site" evidence="1">
    <location>
        <position position="12"/>
    </location>
    <ligand>
        <name>ADP</name>
        <dbReference type="ChEBI" id="CHEBI:456216"/>
    </ligand>
</feature>
<feature type="binding site" evidence="1">
    <location>
        <position position="12"/>
    </location>
    <ligand>
        <name>ATP</name>
        <dbReference type="ChEBI" id="CHEBI:30616"/>
    </ligand>
</feature>
<feature type="binding site" evidence="1">
    <location>
        <position position="12"/>
    </location>
    <ligand>
        <name>sn-glycerol 3-phosphate</name>
        <dbReference type="ChEBI" id="CHEBI:57597"/>
    </ligand>
</feature>
<feature type="binding site" evidence="1">
    <location>
        <position position="13"/>
    </location>
    <ligand>
        <name>ATP</name>
        <dbReference type="ChEBI" id="CHEBI:30616"/>
    </ligand>
</feature>
<feature type="binding site" evidence="1">
    <location>
        <position position="14"/>
    </location>
    <ligand>
        <name>ATP</name>
        <dbReference type="ChEBI" id="CHEBI:30616"/>
    </ligand>
</feature>
<feature type="binding site" evidence="1">
    <location>
        <position position="16"/>
    </location>
    <ligand>
        <name>ADP</name>
        <dbReference type="ChEBI" id="CHEBI:456216"/>
    </ligand>
</feature>
<feature type="binding site" evidence="1">
    <location>
        <position position="82"/>
    </location>
    <ligand>
        <name>glycerol</name>
        <dbReference type="ChEBI" id="CHEBI:17754"/>
    </ligand>
</feature>
<feature type="binding site" evidence="1">
    <location>
        <position position="82"/>
    </location>
    <ligand>
        <name>sn-glycerol 3-phosphate</name>
        <dbReference type="ChEBI" id="CHEBI:57597"/>
    </ligand>
</feature>
<feature type="binding site" evidence="1">
    <location>
        <position position="83"/>
    </location>
    <ligand>
        <name>glycerol</name>
        <dbReference type="ChEBI" id="CHEBI:17754"/>
    </ligand>
</feature>
<feature type="binding site" evidence="1">
    <location>
        <position position="83"/>
    </location>
    <ligand>
        <name>sn-glycerol 3-phosphate</name>
        <dbReference type="ChEBI" id="CHEBI:57597"/>
    </ligand>
</feature>
<feature type="binding site" evidence="1">
    <location>
        <position position="135"/>
    </location>
    <ligand>
        <name>glycerol</name>
        <dbReference type="ChEBI" id="CHEBI:17754"/>
    </ligand>
</feature>
<feature type="binding site" evidence="1">
    <location>
        <position position="135"/>
    </location>
    <ligand>
        <name>sn-glycerol 3-phosphate</name>
        <dbReference type="ChEBI" id="CHEBI:57597"/>
    </ligand>
</feature>
<feature type="binding site" evidence="1">
    <location>
        <position position="245"/>
    </location>
    <ligand>
        <name>glycerol</name>
        <dbReference type="ChEBI" id="CHEBI:17754"/>
    </ligand>
</feature>
<feature type="binding site" evidence="1">
    <location>
        <position position="245"/>
    </location>
    <ligand>
        <name>sn-glycerol 3-phosphate</name>
        <dbReference type="ChEBI" id="CHEBI:57597"/>
    </ligand>
</feature>
<feature type="binding site" evidence="1">
    <location>
        <position position="246"/>
    </location>
    <ligand>
        <name>glycerol</name>
        <dbReference type="ChEBI" id="CHEBI:17754"/>
    </ligand>
</feature>
<feature type="binding site" evidence="1">
    <location>
        <position position="267"/>
    </location>
    <ligand>
        <name>ADP</name>
        <dbReference type="ChEBI" id="CHEBI:456216"/>
    </ligand>
</feature>
<feature type="binding site" evidence="1">
    <location>
        <position position="267"/>
    </location>
    <ligand>
        <name>ATP</name>
        <dbReference type="ChEBI" id="CHEBI:30616"/>
    </ligand>
</feature>
<feature type="binding site" evidence="1">
    <location>
        <position position="310"/>
    </location>
    <ligand>
        <name>ADP</name>
        <dbReference type="ChEBI" id="CHEBI:456216"/>
    </ligand>
</feature>
<feature type="binding site" evidence="1">
    <location>
        <position position="310"/>
    </location>
    <ligand>
        <name>ATP</name>
        <dbReference type="ChEBI" id="CHEBI:30616"/>
    </ligand>
</feature>
<feature type="binding site" evidence="1">
    <location>
        <position position="314"/>
    </location>
    <ligand>
        <name>ATP</name>
        <dbReference type="ChEBI" id="CHEBI:30616"/>
    </ligand>
</feature>
<feature type="binding site" evidence="1">
    <location>
        <position position="411"/>
    </location>
    <ligand>
        <name>ADP</name>
        <dbReference type="ChEBI" id="CHEBI:456216"/>
    </ligand>
</feature>
<feature type="binding site" evidence="1">
    <location>
        <position position="411"/>
    </location>
    <ligand>
        <name>ATP</name>
        <dbReference type="ChEBI" id="CHEBI:30616"/>
    </ligand>
</feature>
<feature type="binding site" evidence="1">
    <location>
        <position position="415"/>
    </location>
    <ligand>
        <name>ADP</name>
        <dbReference type="ChEBI" id="CHEBI:456216"/>
    </ligand>
</feature>
<organism>
    <name type="scientific">Clostridium beijerinckii (strain ATCC 51743 / NCIMB 8052)</name>
    <name type="common">Clostridium acetobutylicum</name>
    <dbReference type="NCBI Taxonomy" id="290402"/>
    <lineage>
        <taxon>Bacteria</taxon>
        <taxon>Bacillati</taxon>
        <taxon>Bacillota</taxon>
        <taxon>Clostridia</taxon>
        <taxon>Eubacteriales</taxon>
        <taxon>Clostridiaceae</taxon>
        <taxon>Clostridium</taxon>
    </lineage>
</organism>
<reference key="1">
    <citation type="submission" date="2007-06" db="EMBL/GenBank/DDBJ databases">
        <title>Complete sequence of Clostridium beijerinckii NCIMB 8052.</title>
        <authorList>
            <consortium name="US DOE Joint Genome Institute"/>
            <person name="Copeland A."/>
            <person name="Lucas S."/>
            <person name="Lapidus A."/>
            <person name="Barry K."/>
            <person name="Detter J.C."/>
            <person name="Glavina del Rio T."/>
            <person name="Hammon N."/>
            <person name="Israni S."/>
            <person name="Dalin E."/>
            <person name="Tice H."/>
            <person name="Pitluck S."/>
            <person name="Sims D."/>
            <person name="Brettin T."/>
            <person name="Bruce D."/>
            <person name="Tapia R."/>
            <person name="Brainard J."/>
            <person name="Schmutz J."/>
            <person name="Larimer F."/>
            <person name="Land M."/>
            <person name="Hauser L."/>
            <person name="Kyrpides N."/>
            <person name="Mikhailova N."/>
            <person name="Bennet G."/>
            <person name="Cann I."/>
            <person name="Chen J.-S."/>
            <person name="Contreras A.L."/>
            <person name="Jones D."/>
            <person name="Kashket E."/>
            <person name="Mitchell W."/>
            <person name="Stoddard S."/>
            <person name="Schwarz W."/>
            <person name="Qureshi N."/>
            <person name="Young M."/>
            <person name="Shi Z."/>
            <person name="Ezeji T."/>
            <person name="White B."/>
            <person name="Blaschek H."/>
            <person name="Richardson P."/>
        </authorList>
    </citation>
    <scope>NUCLEOTIDE SEQUENCE [LARGE SCALE GENOMIC DNA]</scope>
    <source>
        <strain>ATCC 51743 / NCIMB 8052</strain>
    </source>
</reference>
<dbReference type="EC" id="2.7.1.30" evidence="1"/>
<dbReference type="EMBL" id="CP000721">
    <property type="protein sequence ID" value="ABR36618.1"/>
    <property type="molecule type" value="Genomic_DNA"/>
</dbReference>
<dbReference type="RefSeq" id="WP_012060665.1">
    <property type="nucleotide sequence ID" value="NC_009617.1"/>
</dbReference>
<dbReference type="SMR" id="A6M1Y8"/>
<dbReference type="KEGG" id="cbe:Cbei_4509"/>
<dbReference type="eggNOG" id="COG0554">
    <property type="taxonomic scope" value="Bacteria"/>
</dbReference>
<dbReference type="HOGENOM" id="CLU_009281_2_3_9"/>
<dbReference type="UniPathway" id="UPA00618">
    <property type="reaction ID" value="UER00672"/>
</dbReference>
<dbReference type="Proteomes" id="UP000000565">
    <property type="component" value="Chromosome"/>
</dbReference>
<dbReference type="GO" id="GO:0005829">
    <property type="term" value="C:cytosol"/>
    <property type="evidence" value="ECO:0007669"/>
    <property type="project" value="TreeGrafter"/>
</dbReference>
<dbReference type="GO" id="GO:0005524">
    <property type="term" value="F:ATP binding"/>
    <property type="evidence" value="ECO:0007669"/>
    <property type="project" value="UniProtKB-UniRule"/>
</dbReference>
<dbReference type="GO" id="GO:0004370">
    <property type="term" value="F:glycerol kinase activity"/>
    <property type="evidence" value="ECO:0000250"/>
    <property type="project" value="UniProtKB"/>
</dbReference>
<dbReference type="GO" id="GO:0019563">
    <property type="term" value="P:glycerol catabolic process"/>
    <property type="evidence" value="ECO:0007669"/>
    <property type="project" value="UniProtKB-UniRule"/>
</dbReference>
<dbReference type="GO" id="GO:0006071">
    <property type="term" value="P:glycerol metabolic process"/>
    <property type="evidence" value="ECO:0000250"/>
    <property type="project" value="UniProtKB"/>
</dbReference>
<dbReference type="GO" id="GO:0006072">
    <property type="term" value="P:glycerol-3-phosphate metabolic process"/>
    <property type="evidence" value="ECO:0007669"/>
    <property type="project" value="InterPro"/>
</dbReference>
<dbReference type="CDD" id="cd07786">
    <property type="entry name" value="FGGY_EcGK_like"/>
    <property type="match status" value="1"/>
</dbReference>
<dbReference type="FunFam" id="3.30.420.40:FF:000007">
    <property type="entry name" value="Glycerol kinase"/>
    <property type="match status" value="1"/>
</dbReference>
<dbReference type="FunFam" id="3.30.420.40:FF:000008">
    <property type="entry name" value="Glycerol kinase"/>
    <property type="match status" value="1"/>
</dbReference>
<dbReference type="Gene3D" id="3.30.420.40">
    <property type="match status" value="2"/>
</dbReference>
<dbReference type="HAMAP" id="MF_00186">
    <property type="entry name" value="Glycerol_kin"/>
    <property type="match status" value="1"/>
</dbReference>
<dbReference type="InterPro" id="IPR043129">
    <property type="entry name" value="ATPase_NBD"/>
</dbReference>
<dbReference type="InterPro" id="IPR000577">
    <property type="entry name" value="Carb_kinase_FGGY"/>
</dbReference>
<dbReference type="InterPro" id="IPR018483">
    <property type="entry name" value="Carb_kinase_FGGY_CS"/>
</dbReference>
<dbReference type="InterPro" id="IPR018485">
    <property type="entry name" value="FGGY_C"/>
</dbReference>
<dbReference type="InterPro" id="IPR018484">
    <property type="entry name" value="FGGY_N"/>
</dbReference>
<dbReference type="InterPro" id="IPR005999">
    <property type="entry name" value="Glycerol_kin"/>
</dbReference>
<dbReference type="NCBIfam" id="TIGR01311">
    <property type="entry name" value="glycerol_kin"/>
    <property type="match status" value="1"/>
</dbReference>
<dbReference type="NCBIfam" id="NF000756">
    <property type="entry name" value="PRK00047.1"/>
    <property type="match status" value="1"/>
</dbReference>
<dbReference type="PANTHER" id="PTHR10196:SF69">
    <property type="entry name" value="GLYCEROL KINASE"/>
    <property type="match status" value="1"/>
</dbReference>
<dbReference type="PANTHER" id="PTHR10196">
    <property type="entry name" value="SUGAR KINASE"/>
    <property type="match status" value="1"/>
</dbReference>
<dbReference type="Pfam" id="PF02782">
    <property type="entry name" value="FGGY_C"/>
    <property type="match status" value="1"/>
</dbReference>
<dbReference type="Pfam" id="PF00370">
    <property type="entry name" value="FGGY_N"/>
    <property type="match status" value="1"/>
</dbReference>
<dbReference type="PIRSF" id="PIRSF000538">
    <property type="entry name" value="GlpK"/>
    <property type="match status" value="1"/>
</dbReference>
<dbReference type="SUPFAM" id="SSF53067">
    <property type="entry name" value="Actin-like ATPase domain"/>
    <property type="match status" value="2"/>
</dbReference>
<dbReference type="PROSITE" id="PS00933">
    <property type="entry name" value="FGGY_KINASES_1"/>
    <property type="match status" value="1"/>
</dbReference>
<dbReference type="PROSITE" id="PS00445">
    <property type="entry name" value="FGGY_KINASES_2"/>
    <property type="match status" value="1"/>
</dbReference>
<accession>A6M1Y8</accession>
<name>GLPK_CLOB8</name>
<evidence type="ECO:0000255" key="1">
    <source>
        <dbReference type="HAMAP-Rule" id="MF_00186"/>
    </source>
</evidence>
<gene>
    <name evidence="1" type="primary">glpK</name>
    <name type="ordered locus">Cbei_4509</name>
</gene>
<comment type="function">
    <text evidence="1">Key enzyme in the regulation of glycerol uptake and metabolism. Catalyzes the phosphorylation of glycerol to yield sn-glycerol 3-phosphate.</text>
</comment>
<comment type="catalytic activity">
    <reaction evidence="1">
        <text>glycerol + ATP = sn-glycerol 3-phosphate + ADP + H(+)</text>
        <dbReference type="Rhea" id="RHEA:21644"/>
        <dbReference type="ChEBI" id="CHEBI:15378"/>
        <dbReference type="ChEBI" id="CHEBI:17754"/>
        <dbReference type="ChEBI" id="CHEBI:30616"/>
        <dbReference type="ChEBI" id="CHEBI:57597"/>
        <dbReference type="ChEBI" id="CHEBI:456216"/>
        <dbReference type="EC" id="2.7.1.30"/>
    </reaction>
</comment>
<comment type="activity regulation">
    <text evidence="1">Activated by phosphorylation and inhibited by fructose 1,6-bisphosphate (FBP).</text>
</comment>
<comment type="pathway">
    <text evidence="1">Polyol metabolism; glycerol degradation via glycerol kinase pathway; sn-glycerol 3-phosphate from glycerol: step 1/1.</text>
</comment>
<comment type="subunit">
    <text evidence="1">Homotetramer and homodimer (in equilibrium).</text>
</comment>
<comment type="similarity">
    <text evidence="1">Belongs to the FGGY kinase family.</text>
</comment>
<keyword id="KW-0067">ATP-binding</keyword>
<keyword id="KW-0319">Glycerol metabolism</keyword>
<keyword id="KW-0418">Kinase</keyword>
<keyword id="KW-0547">Nucleotide-binding</keyword>
<keyword id="KW-0808">Transferase</keyword>
<sequence>MKKYILALDQGTTSSRAIIFDKEQNILGVSQKEFTQIYPNQGWVEHNPLEIWASQYGVLQEVIAKTNITQEEVAAIGITNQRETTIVWDKNTGEPVYNAIVWQCRRTAGIIEELKLDKEFSEYVKENTGLLLDAYFSATKIKWILDNVEGARERAEKGELLFGTVDTWLVWKLTNGKVHVTDYTNASRTMLYNIKELRWDERILEKLNIPKSMLPEVKNSSEVYGYTNLGGTGGVRVPIAGMAGDQQCALFGQTCFEEGSVKNTYGTGCFLLMNTGEKMIHSKNGLVSTIAVGIDGKVQYALEGSVFVGGAVIQWIRDELKLVTDAADTEYFAQKVEDNGGVYVVPAFTGLGAPYWDMYARGAIFGLTRGANRNHIIRAALESIAYQSKDLIDAMQEDAGCKLTRLKVDGGASRNNLLMQFQADITGAEVVRPIITETTALGAAYLAGLAVGFWKSKEEIAEKWAVSQSYSPNLAEEKKEKLYKGWKKAVKRAEGWEEE</sequence>